<keyword id="KW-0255">Endonuclease</keyword>
<keyword id="KW-0378">Hydrolase</keyword>
<keyword id="KW-0479">Metal-binding</keyword>
<keyword id="KW-0540">Nuclease</keyword>
<keyword id="KW-0819">tRNA processing</keyword>
<keyword id="KW-0862">Zinc</keyword>
<proteinExistence type="inferred from homology"/>
<sequence length="307" mass="34199">MEFVFLGTGAGVPSKGRNVSAIALQLLEERGQTWLFDCGEATQHQILHTSVRPRRIEKIFITHLHGDHIFGLPGLLGSRSFQGGTTPLTVYGPKGIKQFIEVALSVSTTHVKYPLEIVEITEEGTVFEDNEFHVETKRLSHGIECFGYRIIEKDIQGALLVDKLLEMGVKPGPLFKRLKDGEVVELENGTILNGNDFIGPPQKGRVITILGDTRYCEASRELAQDADVLVHEATFAAEDEQQAYDYFHSTSKQAASIALQANAKRLILTHISSRYQGDTYKELLKEARELFSNTEIATDLKSFPVDR</sequence>
<name>RNZ_BACHK</name>
<feature type="chain" id="PRO_0000155846" description="Ribonuclease Z">
    <location>
        <begin position="1"/>
        <end position="307"/>
    </location>
</feature>
<feature type="active site" description="Proton acceptor" evidence="1">
    <location>
        <position position="67"/>
    </location>
</feature>
<feature type="binding site" evidence="1">
    <location>
        <position position="63"/>
    </location>
    <ligand>
        <name>Zn(2+)</name>
        <dbReference type="ChEBI" id="CHEBI:29105"/>
        <label>1</label>
        <note>catalytic</note>
    </ligand>
</feature>
<feature type="binding site" evidence="1">
    <location>
        <position position="65"/>
    </location>
    <ligand>
        <name>Zn(2+)</name>
        <dbReference type="ChEBI" id="CHEBI:29105"/>
        <label>1</label>
        <note>catalytic</note>
    </ligand>
</feature>
<feature type="binding site" evidence="1">
    <location>
        <position position="67"/>
    </location>
    <ligand>
        <name>Zn(2+)</name>
        <dbReference type="ChEBI" id="CHEBI:29105"/>
        <label>2</label>
        <note>catalytic</note>
    </ligand>
</feature>
<feature type="binding site" evidence="1">
    <location>
        <position position="68"/>
    </location>
    <ligand>
        <name>Zn(2+)</name>
        <dbReference type="ChEBI" id="CHEBI:29105"/>
        <label>2</label>
        <note>catalytic</note>
    </ligand>
</feature>
<feature type="binding site" evidence="1">
    <location>
        <position position="141"/>
    </location>
    <ligand>
        <name>Zn(2+)</name>
        <dbReference type="ChEBI" id="CHEBI:29105"/>
        <label>1</label>
        <note>catalytic</note>
    </ligand>
</feature>
<feature type="binding site" evidence="1">
    <location>
        <position position="212"/>
    </location>
    <ligand>
        <name>Zn(2+)</name>
        <dbReference type="ChEBI" id="CHEBI:29105"/>
        <label>1</label>
        <note>catalytic</note>
    </ligand>
</feature>
<feature type="binding site" evidence="1">
    <location>
        <position position="212"/>
    </location>
    <ligand>
        <name>Zn(2+)</name>
        <dbReference type="ChEBI" id="CHEBI:29105"/>
        <label>2</label>
        <note>catalytic</note>
    </ligand>
</feature>
<feature type="binding site" evidence="1">
    <location>
        <position position="270"/>
    </location>
    <ligand>
        <name>Zn(2+)</name>
        <dbReference type="ChEBI" id="CHEBI:29105"/>
        <label>2</label>
        <note>catalytic</note>
    </ligand>
</feature>
<evidence type="ECO:0000255" key="1">
    <source>
        <dbReference type="HAMAP-Rule" id="MF_01818"/>
    </source>
</evidence>
<organism>
    <name type="scientific">Bacillus thuringiensis subsp. konkukian (strain 97-27)</name>
    <dbReference type="NCBI Taxonomy" id="281309"/>
    <lineage>
        <taxon>Bacteria</taxon>
        <taxon>Bacillati</taxon>
        <taxon>Bacillota</taxon>
        <taxon>Bacilli</taxon>
        <taxon>Bacillales</taxon>
        <taxon>Bacillaceae</taxon>
        <taxon>Bacillus</taxon>
        <taxon>Bacillus cereus group</taxon>
    </lineage>
</organism>
<reference key="1">
    <citation type="journal article" date="2006" name="J. Bacteriol.">
        <title>Pathogenomic sequence analysis of Bacillus cereus and Bacillus thuringiensis isolates closely related to Bacillus anthracis.</title>
        <authorList>
            <person name="Han C.S."/>
            <person name="Xie G."/>
            <person name="Challacombe J.F."/>
            <person name="Altherr M.R."/>
            <person name="Bhotika S.S."/>
            <person name="Bruce D."/>
            <person name="Campbell C.S."/>
            <person name="Campbell M.L."/>
            <person name="Chen J."/>
            <person name="Chertkov O."/>
            <person name="Cleland C."/>
            <person name="Dimitrijevic M."/>
            <person name="Doggett N.A."/>
            <person name="Fawcett J.J."/>
            <person name="Glavina T."/>
            <person name="Goodwin L.A."/>
            <person name="Hill K.K."/>
            <person name="Hitchcock P."/>
            <person name="Jackson P.J."/>
            <person name="Keim P."/>
            <person name="Kewalramani A.R."/>
            <person name="Longmire J."/>
            <person name="Lucas S."/>
            <person name="Malfatti S."/>
            <person name="McMurry K."/>
            <person name="Meincke L.J."/>
            <person name="Misra M."/>
            <person name="Moseman B.L."/>
            <person name="Mundt M."/>
            <person name="Munk A.C."/>
            <person name="Okinaka R.T."/>
            <person name="Parson-Quintana B."/>
            <person name="Reilly L.P."/>
            <person name="Richardson P."/>
            <person name="Robinson D.L."/>
            <person name="Rubin E."/>
            <person name="Saunders E."/>
            <person name="Tapia R."/>
            <person name="Tesmer J.G."/>
            <person name="Thayer N."/>
            <person name="Thompson L.S."/>
            <person name="Tice H."/>
            <person name="Ticknor L.O."/>
            <person name="Wills P.L."/>
            <person name="Brettin T.S."/>
            <person name="Gilna P."/>
        </authorList>
    </citation>
    <scope>NUCLEOTIDE SEQUENCE [LARGE SCALE GENOMIC DNA]</scope>
    <source>
        <strain>97-27</strain>
    </source>
</reference>
<gene>
    <name evidence="1" type="primary">rnz</name>
    <name type="ordered locus">BT9727_3887</name>
</gene>
<protein>
    <recommendedName>
        <fullName evidence="1">Ribonuclease Z</fullName>
        <shortName evidence="1">RNase Z</shortName>
        <ecNumber evidence="1">3.1.26.11</ecNumber>
    </recommendedName>
    <alternativeName>
        <fullName evidence="1">tRNA 3 endonuclease</fullName>
    </alternativeName>
    <alternativeName>
        <fullName evidence="1">tRNase Z</fullName>
    </alternativeName>
</protein>
<comment type="function">
    <text evidence="1">Zinc phosphodiesterase, which displays some tRNA 3'-processing endonuclease activity. Probably involved in tRNA maturation, by removing a 3'-trailer from precursor tRNA.</text>
</comment>
<comment type="catalytic activity">
    <reaction evidence="1">
        <text>Endonucleolytic cleavage of RNA, removing extra 3' nucleotides from tRNA precursor, generating 3' termini of tRNAs. A 3'-hydroxy group is left at the tRNA terminus and a 5'-phosphoryl group is left at the trailer molecule.</text>
        <dbReference type="EC" id="3.1.26.11"/>
    </reaction>
</comment>
<comment type="cofactor">
    <cofactor evidence="1">
        <name>Zn(2+)</name>
        <dbReference type="ChEBI" id="CHEBI:29105"/>
    </cofactor>
    <text evidence="1">Binds 2 Zn(2+) ions.</text>
</comment>
<comment type="subunit">
    <text evidence="1">Homodimer.</text>
</comment>
<comment type="similarity">
    <text evidence="1">Belongs to the RNase Z family.</text>
</comment>
<accession>Q6HE20</accession>
<dbReference type="EC" id="3.1.26.11" evidence="1"/>
<dbReference type="EMBL" id="AE017355">
    <property type="protein sequence ID" value="AAT60760.1"/>
    <property type="molecule type" value="Genomic_DNA"/>
</dbReference>
<dbReference type="RefSeq" id="WP_000397446.1">
    <property type="nucleotide sequence ID" value="NC_005957.1"/>
</dbReference>
<dbReference type="RefSeq" id="YP_038206.1">
    <property type="nucleotide sequence ID" value="NC_005957.1"/>
</dbReference>
<dbReference type="SMR" id="Q6HE20"/>
<dbReference type="KEGG" id="btk:BT9727_3887"/>
<dbReference type="PATRIC" id="fig|281309.8.peg.4146"/>
<dbReference type="HOGENOM" id="CLU_031317_2_0_9"/>
<dbReference type="Proteomes" id="UP000001301">
    <property type="component" value="Chromosome"/>
</dbReference>
<dbReference type="GO" id="GO:0042781">
    <property type="term" value="F:3'-tRNA processing endoribonuclease activity"/>
    <property type="evidence" value="ECO:0007669"/>
    <property type="project" value="UniProtKB-UniRule"/>
</dbReference>
<dbReference type="GO" id="GO:0008270">
    <property type="term" value="F:zinc ion binding"/>
    <property type="evidence" value="ECO:0007669"/>
    <property type="project" value="UniProtKB-UniRule"/>
</dbReference>
<dbReference type="CDD" id="cd07717">
    <property type="entry name" value="RNaseZ_ZiPD-like_MBL-fold"/>
    <property type="match status" value="1"/>
</dbReference>
<dbReference type="FunFam" id="3.60.15.10:FF:000002">
    <property type="entry name" value="Ribonuclease Z"/>
    <property type="match status" value="1"/>
</dbReference>
<dbReference type="Gene3D" id="3.60.15.10">
    <property type="entry name" value="Ribonuclease Z/Hydroxyacylglutathione hydrolase-like"/>
    <property type="match status" value="1"/>
</dbReference>
<dbReference type="HAMAP" id="MF_01818">
    <property type="entry name" value="RNase_Z_BN"/>
    <property type="match status" value="1"/>
</dbReference>
<dbReference type="InterPro" id="IPR001279">
    <property type="entry name" value="Metallo-B-lactamas"/>
</dbReference>
<dbReference type="InterPro" id="IPR036866">
    <property type="entry name" value="RibonucZ/Hydroxyglut_hydro"/>
</dbReference>
<dbReference type="InterPro" id="IPR013471">
    <property type="entry name" value="RNase_Z/BN"/>
</dbReference>
<dbReference type="NCBIfam" id="NF000800">
    <property type="entry name" value="PRK00055.1-1"/>
    <property type="match status" value="1"/>
</dbReference>
<dbReference type="NCBIfam" id="NF000801">
    <property type="entry name" value="PRK00055.1-3"/>
    <property type="match status" value="1"/>
</dbReference>
<dbReference type="NCBIfam" id="TIGR02651">
    <property type="entry name" value="RNase_Z"/>
    <property type="match status" value="1"/>
</dbReference>
<dbReference type="PANTHER" id="PTHR46018">
    <property type="entry name" value="ZINC PHOSPHODIESTERASE ELAC PROTEIN 1"/>
    <property type="match status" value="1"/>
</dbReference>
<dbReference type="PANTHER" id="PTHR46018:SF2">
    <property type="entry name" value="ZINC PHOSPHODIESTERASE ELAC PROTEIN 1"/>
    <property type="match status" value="1"/>
</dbReference>
<dbReference type="Pfam" id="PF00753">
    <property type="entry name" value="Lactamase_B"/>
    <property type="match status" value="1"/>
</dbReference>
<dbReference type="Pfam" id="PF12706">
    <property type="entry name" value="Lactamase_B_2"/>
    <property type="match status" value="1"/>
</dbReference>
<dbReference type="SMART" id="SM00849">
    <property type="entry name" value="Lactamase_B"/>
    <property type="match status" value="1"/>
</dbReference>
<dbReference type="SUPFAM" id="SSF56281">
    <property type="entry name" value="Metallo-hydrolase/oxidoreductase"/>
    <property type="match status" value="1"/>
</dbReference>